<sequence length="158" mass="18411">MTRLLGIIRIRGYAGTPWYIQDTLKMLRLPRRFNAMVYEDSSSIRGMLKIAEPYITWGELNEEGLKLLLTRLHTKIGNLKITDDILKSQLKIESYNLFVKKIMDGEIKLHKLDDYFKLPIRLHPPSGGFKGKINRPFSVKGEFGYRGEKINELIKRMV</sequence>
<organism>
    <name type="scientific">Sulfurisphaera tokodaii (strain DSM 16993 / JCM 10545 / NBRC 100140 / 7)</name>
    <name type="common">Sulfolobus tokodaii</name>
    <dbReference type="NCBI Taxonomy" id="273063"/>
    <lineage>
        <taxon>Archaea</taxon>
        <taxon>Thermoproteota</taxon>
        <taxon>Thermoprotei</taxon>
        <taxon>Sulfolobales</taxon>
        <taxon>Sulfolobaceae</taxon>
        <taxon>Sulfurisphaera</taxon>
    </lineage>
</organism>
<proteinExistence type="inferred from homology"/>
<protein>
    <recommendedName>
        <fullName evidence="1">Large ribosomal subunit protein uL30</fullName>
    </recommendedName>
    <alternativeName>
        <fullName evidence="2">50S ribosomal protein L30</fullName>
    </alternativeName>
</protein>
<gene>
    <name evidence="1" type="primary">rpl30</name>
    <name type="ordered locus">STK_04130</name>
</gene>
<dbReference type="EMBL" id="BA000023">
    <property type="protein sequence ID" value="BAB65399.1"/>
    <property type="molecule type" value="Genomic_DNA"/>
</dbReference>
<dbReference type="RefSeq" id="WP_010978382.1">
    <property type="nucleotide sequence ID" value="NC_003106.2"/>
</dbReference>
<dbReference type="SMR" id="Q975K1"/>
<dbReference type="STRING" id="273063.STK_04130"/>
<dbReference type="GeneID" id="1458346"/>
<dbReference type="KEGG" id="sto:STK_04130"/>
<dbReference type="PATRIC" id="fig|273063.9.peg.479"/>
<dbReference type="eggNOG" id="arCOG04086">
    <property type="taxonomic scope" value="Archaea"/>
</dbReference>
<dbReference type="OrthoDB" id="6379at2157"/>
<dbReference type="Proteomes" id="UP000001015">
    <property type="component" value="Chromosome"/>
</dbReference>
<dbReference type="GO" id="GO:0022625">
    <property type="term" value="C:cytosolic large ribosomal subunit"/>
    <property type="evidence" value="ECO:0007669"/>
    <property type="project" value="TreeGrafter"/>
</dbReference>
<dbReference type="GO" id="GO:0003723">
    <property type="term" value="F:RNA binding"/>
    <property type="evidence" value="ECO:0007669"/>
    <property type="project" value="TreeGrafter"/>
</dbReference>
<dbReference type="GO" id="GO:0003735">
    <property type="term" value="F:structural constituent of ribosome"/>
    <property type="evidence" value="ECO:0007669"/>
    <property type="project" value="InterPro"/>
</dbReference>
<dbReference type="GO" id="GO:0000463">
    <property type="term" value="P:maturation of LSU-rRNA from tricistronic rRNA transcript (SSU-rRNA, 5.8S rRNA, LSU-rRNA)"/>
    <property type="evidence" value="ECO:0007669"/>
    <property type="project" value="TreeGrafter"/>
</dbReference>
<dbReference type="GO" id="GO:0006412">
    <property type="term" value="P:translation"/>
    <property type="evidence" value="ECO:0007669"/>
    <property type="project" value="UniProtKB-UniRule"/>
</dbReference>
<dbReference type="CDD" id="cd01657">
    <property type="entry name" value="Ribosomal_L7_archeal_euk"/>
    <property type="match status" value="1"/>
</dbReference>
<dbReference type="Gene3D" id="1.10.15.30">
    <property type="match status" value="1"/>
</dbReference>
<dbReference type="Gene3D" id="3.30.1390.20">
    <property type="entry name" value="Ribosomal protein L30, ferredoxin-like fold domain"/>
    <property type="match status" value="1"/>
</dbReference>
<dbReference type="HAMAP" id="MF_01371_A">
    <property type="entry name" value="Ribosomal_uL30_A"/>
    <property type="match status" value="1"/>
</dbReference>
<dbReference type="InterPro" id="IPR036919">
    <property type="entry name" value="Ribo_uL30_ferredoxin-like_sf"/>
</dbReference>
<dbReference type="InterPro" id="IPR039699">
    <property type="entry name" value="Ribosomal_uL30"/>
</dbReference>
<dbReference type="InterPro" id="IPR005997">
    <property type="entry name" value="Ribosomal_uL30_arc"/>
</dbReference>
<dbReference type="InterPro" id="IPR035808">
    <property type="entry name" value="Ribosomal_uL30_euk_arc"/>
</dbReference>
<dbReference type="InterPro" id="IPR016082">
    <property type="entry name" value="Ribosomal_uL30_ferredoxin-like"/>
</dbReference>
<dbReference type="NCBIfam" id="NF004711">
    <property type="entry name" value="PRK06049.1"/>
    <property type="match status" value="1"/>
</dbReference>
<dbReference type="NCBIfam" id="TIGR01309">
    <property type="entry name" value="uL30_arch"/>
    <property type="match status" value="1"/>
</dbReference>
<dbReference type="PANTHER" id="PTHR11524">
    <property type="entry name" value="60S RIBOSOMAL PROTEIN L7"/>
    <property type="match status" value="1"/>
</dbReference>
<dbReference type="PANTHER" id="PTHR11524:SF16">
    <property type="entry name" value="LARGE RIBOSOMAL SUBUNIT PROTEIN UL30"/>
    <property type="match status" value="1"/>
</dbReference>
<dbReference type="Pfam" id="PF00327">
    <property type="entry name" value="Ribosomal_L30"/>
    <property type="match status" value="1"/>
</dbReference>
<dbReference type="SUPFAM" id="SSF55129">
    <property type="entry name" value="Ribosomal protein L30p/L7e"/>
    <property type="match status" value="1"/>
</dbReference>
<comment type="subunit">
    <text evidence="1">Part of the 50S ribosomal subunit.</text>
</comment>
<comment type="similarity">
    <text evidence="1">Belongs to the universal ribosomal protein uL30 family.</text>
</comment>
<accession>Q975K1</accession>
<feature type="chain" id="PRO_0000273915" description="Large ribosomal subunit protein uL30">
    <location>
        <begin position="1"/>
        <end position="158"/>
    </location>
</feature>
<reference key="1">
    <citation type="journal article" date="2001" name="DNA Res.">
        <title>Complete genome sequence of an aerobic thermoacidophilic Crenarchaeon, Sulfolobus tokodaii strain7.</title>
        <authorList>
            <person name="Kawarabayasi Y."/>
            <person name="Hino Y."/>
            <person name="Horikawa H."/>
            <person name="Jin-no K."/>
            <person name="Takahashi M."/>
            <person name="Sekine M."/>
            <person name="Baba S."/>
            <person name="Ankai A."/>
            <person name="Kosugi H."/>
            <person name="Hosoyama A."/>
            <person name="Fukui S."/>
            <person name="Nagai Y."/>
            <person name="Nishijima K."/>
            <person name="Otsuka R."/>
            <person name="Nakazawa H."/>
            <person name="Takamiya M."/>
            <person name="Kato Y."/>
            <person name="Yoshizawa T."/>
            <person name="Tanaka T."/>
            <person name="Kudoh Y."/>
            <person name="Yamazaki J."/>
            <person name="Kushida N."/>
            <person name="Oguchi A."/>
            <person name="Aoki K."/>
            <person name="Masuda S."/>
            <person name="Yanagii M."/>
            <person name="Nishimura M."/>
            <person name="Yamagishi A."/>
            <person name="Oshima T."/>
            <person name="Kikuchi H."/>
        </authorList>
    </citation>
    <scope>NUCLEOTIDE SEQUENCE [LARGE SCALE GENOMIC DNA]</scope>
    <source>
        <strain>DSM 16993 / JCM 10545 / NBRC 100140 / 7</strain>
    </source>
</reference>
<evidence type="ECO:0000255" key="1">
    <source>
        <dbReference type="HAMAP-Rule" id="MF_01371"/>
    </source>
</evidence>
<evidence type="ECO:0000305" key="2"/>
<keyword id="KW-1185">Reference proteome</keyword>
<keyword id="KW-0687">Ribonucleoprotein</keyword>
<keyword id="KW-0689">Ribosomal protein</keyword>
<name>RL30_SULTO</name>